<name>DCUP_SALPC</name>
<dbReference type="EC" id="4.1.1.37" evidence="1"/>
<dbReference type="EMBL" id="CP000857">
    <property type="protein sequence ID" value="ACN48065.1"/>
    <property type="molecule type" value="Genomic_DNA"/>
</dbReference>
<dbReference type="RefSeq" id="WP_000137623.1">
    <property type="nucleotide sequence ID" value="NC_012125.1"/>
</dbReference>
<dbReference type="SMR" id="C0Q2S9"/>
<dbReference type="KEGG" id="sei:SPC_3998"/>
<dbReference type="HOGENOM" id="CLU_040933_0_0_6"/>
<dbReference type="UniPathway" id="UPA00251">
    <property type="reaction ID" value="UER00321"/>
</dbReference>
<dbReference type="Proteomes" id="UP000001599">
    <property type="component" value="Chromosome"/>
</dbReference>
<dbReference type="GO" id="GO:0005829">
    <property type="term" value="C:cytosol"/>
    <property type="evidence" value="ECO:0007669"/>
    <property type="project" value="TreeGrafter"/>
</dbReference>
<dbReference type="GO" id="GO:0004853">
    <property type="term" value="F:uroporphyrinogen decarboxylase activity"/>
    <property type="evidence" value="ECO:0007669"/>
    <property type="project" value="UniProtKB-UniRule"/>
</dbReference>
<dbReference type="GO" id="GO:0019353">
    <property type="term" value="P:protoporphyrinogen IX biosynthetic process from glutamate"/>
    <property type="evidence" value="ECO:0007669"/>
    <property type="project" value="TreeGrafter"/>
</dbReference>
<dbReference type="CDD" id="cd00717">
    <property type="entry name" value="URO-D"/>
    <property type="match status" value="1"/>
</dbReference>
<dbReference type="FunFam" id="3.20.20.210:FF:000001">
    <property type="entry name" value="Uroporphyrinogen decarboxylase"/>
    <property type="match status" value="1"/>
</dbReference>
<dbReference type="Gene3D" id="3.20.20.210">
    <property type="match status" value="1"/>
</dbReference>
<dbReference type="HAMAP" id="MF_00218">
    <property type="entry name" value="URO_D"/>
    <property type="match status" value="1"/>
</dbReference>
<dbReference type="InterPro" id="IPR038071">
    <property type="entry name" value="UROD/MetE-like_sf"/>
</dbReference>
<dbReference type="InterPro" id="IPR006361">
    <property type="entry name" value="Uroporphyrinogen_deCO2ase_HemE"/>
</dbReference>
<dbReference type="InterPro" id="IPR000257">
    <property type="entry name" value="Uroporphyrinogen_deCOase"/>
</dbReference>
<dbReference type="NCBIfam" id="TIGR01464">
    <property type="entry name" value="hemE"/>
    <property type="match status" value="1"/>
</dbReference>
<dbReference type="PANTHER" id="PTHR21091">
    <property type="entry name" value="METHYLTETRAHYDROFOLATE:HOMOCYSTEINE METHYLTRANSFERASE RELATED"/>
    <property type="match status" value="1"/>
</dbReference>
<dbReference type="PANTHER" id="PTHR21091:SF169">
    <property type="entry name" value="UROPORPHYRINOGEN DECARBOXYLASE"/>
    <property type="match status" value="1"/>
</dbReference>
<dbReference type="Pfam" id="PF01208">
    <property type="entry name" value="URO-D"/>
    <property type="match status" value="1"/>
</dbReference>
<dbReference type="SUPFAM" id="SSF51726">
    <property type="entry name" value="UROD/MetE-like"/>
    <property type="match status" value="1"/>
</dbReference>
<dbReference type="PROSITE" id="PS00906">
    <property type="entry name" value="UROD_1"/>
    <property type="match status" value="1"/>
</dbReference>
<dbReference type="PROSITE" id="PS00907">
    <property type="entry name" value="UROD_2"/>
    <property type="match status" value="1"/>
</dbReference>
<proteinExistence type="inferred from homology"/>
<organism>
    <name type="scientific">Salmonella paratyphi C (strain RKS4594)</name>
    <dbReference type="NCBI Taxonomy" id="476213"/>
    <lineage>
        <taxon>Bacteria</taxon>
        <taxon>Pseudomonadati</taxon>
        <taxon>Pseudomonadota</taxon>
        <taxon>Gammaproteobacteria</taxon>
        <taxon>Enterobacterales</taxon>
        <taxon>Enterobacteriaceae</taxon>
        <taxon>Salmonella</taxon>
    </lineage>
</organism>
<evidence type="ECO:0000255" key="1">
    <source>
        <dbReference type="HAMAP-Rule" id="MF_00218"/>
    </source>
</evidence>
<protein>
    <recommendedName>
        <fullName evidence="1">Uroporphyrinogen decarboxylase</fullName>
        <shortName evidence="1">UPD</shortName>
        <shortName evidence="1">URO-D</shortName>
        <ecNumber evidence="1">4.1.1.37</ecNumber>
    </recommendedName>
</protein>
<comment type="function">
    <text evidence="1">Catalyzes the decarboxylation of four acetate groups of uroporphyrinogen-III to yield coproporphyrinogen-III.</text>
</comment>
<comment type="catalytic activity">
    <reaction evidence="1">
        <text>uroporphyrinogen III + 4 H(+) = coproporphyrinogen III + 4 CO2</text>
        <dbReference type="Rhea" id="RHEA:19865"/>
        <dbReference type="ChEBI" id="CHEBI:15378"/>
        <dbReference type="ChEBI" id="CHEBI:16526"/>
        <dbReference type="ChEBI" id="CHEBI:57308"/>
        <dbReference type="ChEBI" id="CHEBI:57309"/>
        <dbReference type="EC" id="4.1.1.37"/>
    </reaction>
</comment>
<comment type="pathway">
    <text evidence="1">Porphyrin-containing compound metabolism; protoporphyrin-IX biosynthesis; coproporphyrinogen-III from 5-aminolevulinate: step 4/4.</text>
</comment>
<comment type="subunit">
    <text evidence="1">Homodimer.</text>
</comment>
<comment type="subcellular location">
    <subcellularLocation>
        <location evidence="1">Cytoplasm</location>
    </subcellularLocation>
</comment>
<comment type="similarity">
    <text evidence="1">Belongs to the uroporphyrinogen decarboxylase family.</text>
</comment>
<accession>C0Q2S9</accession>
<feature type="chain" id="PRO_1000197537" description="Uroporphyrinogen decarboxylase">
    <location>
        <begin position="1"/>
        <end position="354"/>
    </location>
</feature>
<feature type="binding site" evidence="1">
    <location>
        <begin position="27"/>
        <end position="31"/>
    </location>
    <ligand>
        <name>substrate</name>
    </ligand>
</feature>
<feature type="binding site" evidence="1">
    <location>
        <position position="77"/>
    </location>
    <ligand>
        <name>substrate</name>
    </ligand>
</feature>
<feature type="binding site" evidence="1">
    <location>
        <position position="154"/>
    </location>
    <ligand>
        <name>substrate</name>
    </ligand>
</feature>
<feature type="binding site" evidence="1">
    <location>
        <position position="209"/>
    </location>
    <ligand>
        <name>substrate</name>
    </ligand>
</feature>
<feature type="binding site" evidence="1">
    <location>
        <position position="327"/>
    </location>
    <ligand>
        <name>substrate</name>
    </ligand>
</feature>
<feature type="site" description="Transition state stabilizer" evidence="1">
    <location>
        <position position="77"/>
    </location>
</feature>
<gene>
    <name evidence="1" type="primary">hemE</name>
    <name type="ordered locus">SPC_3998</name>
</gene>
<sequence>MTELKNDRYLRALLRQPVDVTPVWMMRQAGRYLPEYKATRAQAGDFMSLCKNAELACEVTLQPLRRYPLDAAILFSDILTIPDAMGLGLYFEAGEGPRFTAPVTCKADVEKLPIPDPEGELGYVMNAVRTIRRELKGEVPLIGFSGSPWTLATYMVEGGSSKAFTVIKKMMYADPQALHLLLDKLAKSVTLYLNAQIKAGAQSVMIFDTWGGVLTGRDYQQFSLYYMHKIVDGLLRENDGRRVPVTLFTKGGGQWLEAMAETGCDALGLDWTTDIADARRRVGHKVALQGNMDPSMLYAPPARIEDEVATILAGFGQGEGHVFNLGHGIHQDVPPEHAGAFVEAVHRLSAQYHN</sequence>
<reference key="1">
    <citation type="journal article" date="2009" name="PLoS ONE">
        <title>Salmonella paratyphi C: genetic divergence from Salmonella choleraesuis and pathogenic convergence with Salmonella typhi.</title>
        <authorList>
            <person name="Liu W.-Q."/>
            <person name="Feng Y."/>
            <person name="Wang Y."/>
            <person name="Zou Q.-H."/>
            <person name="Chen F."/>
            <person name="Guo J.-T."/>
            <person name="Peng Y.-H."/>
            <person name="Jin Y."/>
            <person name="Li Y.-G."/>
            <person name="Hu S.-N."/>
            <person name="Johnston R.N."/>
            <person name="Liu G.-R."/>
            <person name="Liu S.-L."/>
        </authorList>
    </citation>
    <scope>NUCLEOTIDE SEQUENCE [LARGE SCALE GENOMIC DNA]</scope>
    <source>
        <strain>RKS4594</strain>
    </source>
</reference>
<keyword id="KW-0963">Cytoplasm</keyword>
<keyword id="KW-0210">Decarboxylase</keyword>
<keyword id="KW-0456">Lyase</keyword>
<keyword id="KW-0627">Porphyrin biosynthesis</keyword>